<name>GLYA_DEHMC</name>
<dbReference type="EC" id="2.1.2.1" evidence="1"/>
<dbReference type="EMBL" id="AJ965256">
    <property type="protein sequence ID" value="CAI82601.1"/>
    <property type="molecule type" value="Genomic_DNA"/>
</dbReference>
<dbReference type="RefSeq" id="WP_011308958.1">
    <property type="nucleotide sequence ID" value="NC_007356.1"/>
</dbReference>
<dbReference type="SMR" id="Q3ZZG3"/>
<dbReference type="KEGG" id="deh:cbdbA390"/>
<dbReference type="HOGENOM" id="CLU_022477_2_1_0"/>
<dbReference type="UniPathway" id="UPA00193"/>
<dbReference type="UniPathway" id="UPA00288">
    <property type="reaction ID" value="UER01023"/>
</dbReference>
<dbReference type="Proteomes" id="UP000000433">
    <property type="component" value="Chromosome"/>
</dbReference>
<dbReference type="GO" id="GO:0005829">
    <property type="term" value="C:cytosol"/>
    <property type="evidence" value="ECO:0007669"/>
    <property type="project" value="TreeGrafter"/>
</dbReference>
<dbReference type="GO" id="GO:0004372">
    <property type="term" value="F:glycine hydroxymethyltransferase activity"/>
    <property type="evidence" value="ECO:0007669"/>
    <property type="project" value="UniProtKB-UniRule"/>
</dbReference>
<dbReference type="GO" id="GO:0030170">
    <property type="term" value="F:pyridoxal phosphate binding"/>
    <property type="evidence" value="ECO:0007669"/>
    <property type="project" value="UniProtKB-UniRule"/>
</dbReference>
<dbReference type="GO" id="GO:0019264">
    <property type="term" value="P:glycine biosynthetic process from serine"/>
    <property type="evidence" value="ECO:0007669"/>
    <property type="project" value="UniProtKB-UniRule"/>
</dbReference>
<dbReference type="GO" id="GO:0035999">
    <property type="term" value="P:tetrahydrofolate interconversion"/>
    <property type="evidence" value="ECO:0007669"/>
    <property type="project" value="UniProtKB-UniRule"/>
</dbReference>
<dbReference type="CDD" id="cd00378">
    <property type="entry name" value="SHMT"/>
    <property type="match status" value="1"/>
</dbReference>
<dbReference type="FunFam" id="3.40.640.10:FF:000001">
    <property type="entry name" value="Serine hydroxymethyltransferase"/>
    <property type="match status" value="1"/>
</dbReference>
<dbReference type="Gene3D" id="3.90.1150.10">
    <property type="entry name" value="Aspartate Aminotransferase, domain 1"/>
    <property type="match status" value="1"/>
</dbReference>
<dbReference type="Gene3D" id="3.40.640.10">
    <property type="entry name" value="Type I PLP-dependent aspartate aminotransferase-like (Major domain)"/>
    <property type="match status" value="1"/>
</dbReference>
<dbReference type="HAMAP" id="MF_00051">
    <property type="entry name" value="SHMT"/>
    <property type="match status" value="1"/>
</dbReference>
<dbReference type="InterPro" id="IPR015424">
    <property type="entry name" value="PyrdxlP-dep_Trfase"/>
</dbReference>
<dbReference type="InterPro" id="IPR015421">
    <property type="entry name" value="PyrdxlP-dep_Trfase_major"/>
</dbReference>
<dbReference type="InterPro" id="IPR015422">
    <property type="entry name" value="PyrdxlP-dep_Trfase_small"/>
</dbReference>
<dbReference type="InterPro" id="IPR001085">
    <property type="entry name" value="Ser_HO-MeTrfase"/>
</dbReference>
<dbReference type="InterPro" id="IPR049943">
    <property type="entry name" value="Ser_HO-MeTrfase-like"/>
</dbReference>
<dbReference type="InterPro" id="IPR019798">
    <property type="entry name" value="Ser_HO-MeTrfase_PLP_BS"/>
</dbReference>
<dbReference type="InterPro" id="IPR039429">
    <property type="entry name" value="SHMT-like_dom"/>
</dbReference>
<dbReference type="NCBIfam" id="NF000586">
    <property type="entry name" value="PRK00011.1"/>
    <property type="match status" value="1"/>
</dbReference>
<dbReference type="PANTHER" id="PTHR11680">
    <property type="entry name" value="SERINE HYDROXYMETHYLTRANSFERASE"/>
    <property type="match status" value="1"/>
</dbReference>
<dbReference type="PANTHER" id="PTHR11680:SF35">
    <property type="entry name" value="SERINE HYDROXYMETHYLTRANSFERASE 1"/>
    <property type="match status" value="1"/>
</dbReference>
<dbReference type="Pfam" id="PF00464">
    <property type="entry name" value="SHMT"/>
    <property type="match status" value="1"/>
</dbReference>
<dbReference type="PIRSF" id="PIRSF000412">
    <property type="entry name" value="SHMT"/>
    <property type="match status" value="1"/>
</dbReference>
<dbReference type="SUPFAM" id="SSF53383">
    <property type="entry name" value="PLP-dependent transferases"/>
    <property type="match status" value="1"/>
</dbReference>
<dbReference type="PROSITE" id="PS00096">
    <property type="entry name" value="SHMT"/>
    <property type="match status" value="1"/>
</dbReference>
<feature type="chain" id="PRO_0000234974" description="Serine hydroxymethyltransferase">
    <location>
        <begin position="1"/>
        <end position="415"/>
    </location>
</feature>
<feature type="binding site" evidence="1">
    <location>
        <position position="117"/>
    </location>
    <ligand>
        <name>(6S)-5,6,7,8-tetrahydrofolate</name>
        <dbReference type="ChEBI" id="CHEBI:57453"/>
    </ligand>
</feature>
<feature type="binding site" evidence="1">
    <location>
        <begin position="121"/>
        <end position="123"/>
    </location>
    <ligand>
        <name>(6S)-5,6,7,8-tetrahydrofolate</name>
        <dbReference type="ChEBI" id="CHEBI:57453"/>
    </ligand>
</feature>
<feature type="site" description="Plays an important role in substrate specificity" evidence="1">
    <location>
        <position position="225"/>
    </location>
</feature>
<feature type="modified residue" description="N6-(pyridoxal phosphate)lysine" evidence="1">
    <location>
        <position position="226"/>
    </location>
</feature>
<proteinExistence type="inferred from homology"/>
<keyword id="KW-0028">Amino-acid biosynthesis</keyword>
<keyword id="KW-0963">Cytoplasm</keyword>
<keyword id="KW-0554">One-carbon metabolism</keyword>
<keyword id="KW-0663">Pyridoxal phosphate</keyword>
<keyword id="KW-0808">Transferase</keyword>
<organism>
    <name type="scientific">Dehalococcoides mccartyi (strain CBDB1)</name>
    <dbReference type="NCBI Taxonomy" id="255470"/>
    <lineage>
        <taxon>Bacteria</taxon>
        <taxon>Bacillati</taxon>
        <taxon>Chloroflexota</taxon>
        <taxon>Dehalococcoidia</taxon>
        <taxon>Dehalococcoidales</taxon>
        <taxon>Dehalococcoidaceae</taxon>
        <taxon>Dehalococcoides</taxon>
    </lineage>
</organism>
<reference key="1">
    <citation type="journal article" date="2005" name="Nat. Biotechnol.">
        <title>Genome sequence of the chlorinated compound-respiring bacterium Dehalococcoides species strain CBDB1.</title>
        <authorList>
            <person name="Kube M."/>
            <person name="Beck A."/>
            <person name="Zinder S.H."/>
            <person name="Kuhl H."/>
            <person name="Reinhardt R."/>
            <person name="Adrian L."/>
        </authorList>
    </citation>
    <scope>NUCLEOTIDE SEQUENCE [LARGE SCALE GENOMIC DNA]</scope>
    <source>
        <strain>CBDB1</strain>
    </source>
</reference>
<gene>
    <name evidence="1" type="primary">glyA</name>
    <name type="ordered locus">cbdbA390</name>
</gene>
<sequence>MSFLKTSDPAVYNAIMQETTRLKETIDLIASENYTSKAVLEAQGSVFTNKYAEGYPGKRYYAGCEYADAVEELAIDRAKTLFHAEHANVQPHSGAQANMAAYFAMVKPGDTIMGLTLSHGGHLTHGSKVNFTGKLYHVIEYGLNAETERIDYDNLEKLAMEHRPRMIVTGASAYPRILDFERFRAICDKVDAKLMVDIAHIAGLVAAGLHPSPVPYADVVTSTSHKTLRGPRGGFILCKEQYAKAIDQAVFPVMQGGPLMQVVAAKAVAFQEAMQPGFVTYQKKTLENTQVMAEELRKLGLRLVSGGTDNHLVLVDLSPIGVNGYDAQLALRRAGIVINRNTVPFAENQTANVPAGIRLGCPAATSRGFGPAEIRQTVGWIGKVLKNIGNEDVEKQVLAEVIHLCRKFPVPGIDI</sequence>
<evidence type="ECO:0000255" key="1">
    <source>
        <dbReference type="HAMAP-Rule" id="MF_00051"/>
    </source>
</evidence>
<protein>
    <recommendedName>
        <fullName evidence="1">Serine hydroxymethyltransferase</fullName>
        <shortName evidence="1">SHMT</shortName>
        <shortName evidence="1">Serine methylase</shortName>
        <ecNumber evidence="1">2.1.2.1</ecNumber>
    </recommendedName>
</protein>
<accession>Q3ZZG3</accession>
<comment type="function">
    <text evidence="1">Catalyzes the reversible interconversion of serine and glycine with tetrahydrofolate (THF) serving as the one-carbon carrier. This reaction serves as the major source of one-carbon groups required for the biosynthesis of purines, thymidylate, methionine, and other important biomolecules. Also exhibits THF-independent aldolase activity toward beta-hydroxyamino acids, producing glycine and aldehydes, via a retro-aldol mechanism.</text>
</comment>
<comment type="catalytic activity">
    <reaction evidence="1">
        <text>(6R)-5,10-methylene-5,6,7,8-tetrahydrofolate + glycine + H2O = (6S)-5,6,7,8-tetrahydrofolate + L-serine</text>
        <dbReference type="Rhea" id="RHEA:15481"/>
        <dbReference type="ChEBI" id="CHEBI:15377"/>
        <dbReference type="ChEBI" id="CHEBI:15636"/>
        <dbReference type="ChEBI" id="CHEBI:33384"/>
        <dbReference type="ChEBI" id="CHEBI:57305"/>
        <dbReference type="ChEBI" id="CHEBI:57453"/>
        <dbReference type="EC" id="2.1.2.1"/>
    </reaction>
</comment>
<comment type="cofactor">
    <cofactor evidence="1">
        <name>pyridoxal 5'-phosphate</name>
        <dbReference type="ChEBI" id="CHEBI:597326"/>
    </cofactor>
</comment>
<comment type="pathway">
    <text evidence="1">One-carbon metabolism; tetrahydrofolate interconversion.</text>
</comment>
<comment type="pathway">
    <text evidence="1">Amino-acid biosynthesis; glycine biosynthesis; glycine from L-serine: step 1/1.</text>
</comment>
<comment type="subunit">
    <text evidence="1">Homodimer.</text>
</comment>
<comment type="subcellular location">
    <subcellularLocation>
        <location evidence="1">Cytoplasm</location>
    </subcellularLocation>
</comment>
<comment type="similarity">
    <text evidence="1">Belongs to the SHMT family.</text>
</comment>